<sequence>MIKKFLSSKESKYVTISLDDNFKKNSVDDKFWTYCKGCDSHVFRKDIEENSFVCPKCSRHYGLRARKRINLLIDKGTFMEFNSDVEFQNPLNFPKYKEKVDSYKEKTKESEAVVTGYGRINGIKTVICVMNPDFMMGSMGSIVGEKITYSIEYAAENNLPIIICSASGGARMQEGMVSLMQMAKTSQALSKLEEKSLPYISVLTDPTTGGVTASFAMLGDIIISEPNTLIGFAGPRVIEQTINQKLPEGFQTSEFLLEKGFIDMIVDRRKMKEVLYQILAMHKK</sequence>
<comment type="function">
    <text evidence="1">Component of the acetyl coenzyme A carboxylase (ACC) complex. Biotin carboxylase (BC) catalyzes the carboxylation of biotin on its carrier protein (BCCP) and then the CO(2) group is transferred by the transcarboxylase to acetyl-CoA to form malonyl-CoA.</text>
</comment>
<comment type="catalytic activity">
    <reaction evidence="1">
        <text>N(6)-carboxybiotinyl-L-lysyl-[protein] + acetyl-CoA = N(6)-biotinyl-L-lysyl-[protein] + malonyl-CoA</text>
        <dbReference type="Rhea" id="RHEA:54728"/>
        <dbReference type="Rhea" id="RHEA-COMP:10505"/>
        <dbReference type="Rhea" id="RHEA-COMP:10506"/>
        <dbReference type="ChEBI" id="CHEBI:57288"/>
        <dbReference type="ChEBI" id="CHEBI:57384"/>
        <dbReference type="ChEBI" id="CHEBI:83144"/>
        <dbReference type="ChEBI" id="CHEBI:83145"/>
        <dbReference type="EC" id="2.1.3.15"/>
    </reaction>
</comment>
<comment type="cofactor">
    <cofactor evidence="1">
        <name>Zn(2+)</name>
        <dbReference type="ChEBI" id="CHEBI:29105"/>
    </cofactor>
    <text evidence="1">Binds 1 zinc ion per subunit.</text>
</comment>
<comment type="pathway">
    <text evidence="1">Lipid metabolism; malonyl-CoA biosynthesis; malonyl-CoA from acetyl-CoA: step 1/1.</text>
</comment>
<comment type="subunit">
    <text evidence="1">Acetyl-CoA carboxylase is a heterohexamer composed of biotin carboxyl carrier protein (AccB), biotin carboxylase (AccC) and two subunits each of ACCase subunit alpha (AccA) and ACCase subunit beta (AccD).</text>
</comment>
<comment type="subcellular location">
    <subcellularLocation>
        <location evidence="1">Cytoplasm</location>
    </subcellularLocation>
</comment>
<comment type="similarity">
    <text evidence="1">Belongs to the AccD/PCCB family.</text>
</comment>
<proteinExistence type="inferred from homology"/>
<evidence type="ECO:0000255" key="1">
    <source>
        <dbReference type="HAMAP-Rule" id="MF_01395"/>
    </source>
</evidence>
<evidence type="ECO:0000255" key="2">
    <source>
        <dbReference type="PROSITE-ProRule" id="PRU01136"/>
    </source>
</evidence>
<reference key="1">
    <citation type="journal article" date="2006" name="Nat. Genet.">
        <title>The multidrug-resistant human pathogen Clostridium difficile has a highly mobile, mosaic genome.</title>
        <authorList>
            <person name="Sebaihia M."/>
            <person name="Wren B.W."/>
            <person name="Mullany P."/>
            <person name="Fairweather N.F."/>
            <person name="Minton N."/>
            <person name="Stabler R."/>
            <person name="Thomson N.R."/>
            <person name="Roberts A.P."/>
            <person name="Cerdeno-Tarraga A.M."/>
            <person name="Wang H."/>
            <person name="Holden M.T.G."/>
            <person name="Wright A."/>
            <person name="Churcher C."/>
            <person name="Quail M.A."/>
            <person name="Baker S."/>
            <person name="Bason N."/>
            <person name="Brooks K."/>
            <person name="Chillingworth T."/>
            <person name="Cronin A."/>
            <person name="Davis P."/>
            <person name="Dowd L."/>
            <person name="Fraser A."/>
            <person name="Feltwell T."/>
            <person name="Hance Z."/>
            <person name="Holroyd S."/>
            <person name="Jagels K."/>
            <person name="Moule S."/>
            <person name="Mungall K."/>
            <person name="Price C."/>
            <person name="Rabbinowitsch E."/>
            <person name="Sharp S."/>
            <person name="Simmonds M."/>
            <person name="Stevens K."/>
            <person name="Unwin L."/>
            <person name="Whithead S."/>
            <person name="Dupuy B."/>
            <person name="Dougan G."/>
            <person name="Barrell B."/>
            <person name="Parkhill J."/>
        </authorList>
    </citation>
    <scope>NUCLEOTIDE SEQUENCE [LARGE SCALE GENOMIC DNA]</scope>
    <source>
        <strain>630</strain>
    </source>
</reference>
<organism>
    <name type="scientific">Clostridioides difficile (strain 630)</name>
    <name type="common">Peptoclostridium difficile</name>
    <dbReference type="NCBI Taxonomy" id="272563"/>
    <lineage>
        <taxon>Bacteria</taxon>
        <taxon>Bacillati</taxon>
        <taxon>Bacillota</taxon>
        <taxon>Clostridia</taxon>
        <taxon>Peptostreptococcales</taxon>
        <taxon>Peptostreptococcaceae</taxon>
        <taxon>Clostridioides</taxon>
    </lineage>
</organism>
<name>ACCD_CLOD6</name>
<protein>
    <recommendedName>
        <fullName evidence="1">Acetyl-coenzyme A carboxylase carboxyl transferase subunit beta</fullName>
        <shortName evidence="1">ACCase subunit beta</shortName>
        <shortName evidence="1">Acetyl-CoA carboxylase carboxyltransferase subunit beta</shortName>
        <ecNumber evidence="1">2.1.3.15</ecNumber>
    </recommendedName>
</protein>
<keyword id="KW-0067">ATP-binding</keyword>
<keyword id="KW-0963">Cytoplasm</keyword>
<keyword id="KW-0275">Fatty acid biosynthesis</keyword>
<keyword id="KW-0276">Fatty acid metabolism</keyword>
<keyword id="KW-0444">Lipid biosynthesis</keyword>
<keyword id="KW-0443">Lipid metabolism</keyword>
<keyword id="KW-0479">Metal-binding</keyword>
<keyword id="KW-0547">Nucleotide-binding</keyword>
<keyword id="KW-1185">Reference proteome</keyword>
<keyword id="KW-0808">Transferase</keyword>
<keyword id="KW-0862">Zinc</keyword>
<keyword id="KW-0863">Zinc-finger</keyword>
<feature type="chain" id="PRO_0000358970" description="Acetyl-coenzyme A carboxylase carboxyl transferase subunit beta">
    <location>
        <begin position="1"/>
        <end position="284"/>
    </location>
</feature>
<feature type="domain" description="CoA carboxyltransferase N-terminal" evidence="2">
    <location>
        <begin position="31"/>
        <end position="284"/>
    </location>
</feature>
<feature type="zinc finger region" description="C4-type" evidence="1">
    <location>
        <begin position="35"/>
        <end position="57"/>
    </location>
</feature>
<feature type="binding site" evidence="1">
    <location>
        <position position="35"/>
    </location>
    <ligand>
        <name>Zn(2+)</name>
        <dbReference type="ChEBI" id="CHEBI:29105"/>
    </ligand>
</feature>
<feature type="binding site" evidence="1">
    <location>
        <position position="38"/>
    </location>
    <ligand>
        <name>Zn(2+)</name>
        <dbReference type="ChEBI" id="CHEBI:29105"/>
    </ligand>
</feature>
<feature type="binding site" evidence="1">
    <location>
        <position position="54"/>
    </location>
    <ligand>
        <name>Zn(2+)</name>
        <dbReference type="ChEBI" id="CHEBI:29105"/>
    </ligand>
</feature>
<feature type="binding site" evidence="1">
    <location>
        <position position="57"/>
    </location>
    <ligand>
        <name>Zn(2+)</name>
        <dbReference type="ChEBI" id="CHEBI:29105"/>
    </ligand>
</feature>
<dbReference type="EC" id="2.1.3.15" evidence="1"/>
<dbReference type="EMBL" id="AM180355">
    <property type="protein sequence ID" value="CAJ68812.1"/>
    <property type="molecule type" value="Genomic_DNA"/>
</dbReference>
<dbReference type="RefSeq" id="WP_003424064.1">
    <property type="nucleotide sequence ID" value="NZ_JAUPES010000023.1"/>
</dbReference>
<dbReference type="RefSeq" id="YP_001088443.1">
    <property type="nucleotide sequence ID" value="NC_009089.1"/>
</dbReference>
<dbReference type="SMR" id="Q187P6"/>
<dbReference type="STRING" id="272563.CD630_19370"/>
<dbReference type="EnsemblBacteria" id="CAJ68812">
    <property type="protein sequence ID" value="CAJ68812"/>
    <property type="gene ID" value="CD630_19370"/>
</dbReference>
<dbReference type="GeneID" id="66354322"/>
<dbReference type="KEGG" id="cdf:CD630_19370"/>
<dbReference type="KEGG" id="pdc:CDIF630_02141"/>
<dbReference type="PATRIC" id="fig|272563.120.peg.2033"/>
<dbReference type="eggNOG" id="COG0777">
    <property type="taxonomic scope" value="Bacteria"/>
</dbReference>
<dbReference type="OrthoDB" id="9772975at2"/>
<dbReference type="PhylomeDB" id="Q187P6"/>
<dbReference type="BioCyc" id="PDIF272563:G12WB-2079-MONOMER"/>
<dbReference type="UniPathway" id="UPA00655">
    <property type="reaction ID" value="UER00711"/>
</dbReference>
<dbReference type="Proteomes" id="UP000001978">
    <property type="component" value="Chromosome"/>
</dbReference>
<dbReference type="GO" id="GO:0009317">
    <property type="term" value="C:acetyl-CoA carboxylase complex"/>
    <property type="evidence" value="ECO:0007669"/>
    <property type="project" value="InterPro"/>
</dbReference>
<dbReference type="GO" id="GO:0003989">
    <property type="term" value="F:acetyl-CoA carboxylase activity"/>
    <property type="evidence" value="ECO:0007669"/>
    <property type="project" value="InterPro"/>
</dbReference>
<dbReference type="GO" id="GO:0005524">
    <property type="term" value="F:ATP binding"/>
    <property type="evidence" value="ECO:0007669"/>
    <property type="project" value="UniProtKB-KW"/>
</dbReference>
<dbReference type="GO" id="GO:0016743">
    <property type="term" value="F:carboxyl- or carbamoyltransferase activity"/>
    <property type="evidence" value="ECO:0007669"/>
    <property type="project" value="UniProtKB-UniRule"/>
</dbReference>
<dbReference type="GO" id="GO:0008270">
    <property type="term" value="F:zinc ion binding"/>
    <property type="evidence" value="ECO:0007669"/>
    <property type="project" value="UniProtKB-UniRule"/>
</dbReference>
<dbReference type="GO" id="GO:0006633">
    <property type="term" value="P:fatty acid biosynthetic process"/>
    <property type="evidence" value="ECO:0007669"/>
    <property type="project" value="UniProtKB-KW"/>
</dbReference>
<dbReference type="GO" id="GO:2001295">
    <property type="term" value="P:malonyl-CoA biosynthetic process"/>
    <property type="evidence" value="ECO:0007669"/>
    <property type="project" value="UniProtKB-UniRule"/>
</dbReference>
<dbReference type="Gene3D" id="3.90.226.10">
    <property type="entry name" value="2-enoyl-CoA Hydratase, Chain A, domain 1"/>
    <property type="match status" value="1"/>
</dbReference>
<dbReference type="HAMAP" id="MF_01395">
    <property type="entry name" value="AcetylCoA_CT_beta"/>
    <property type="match status" value="1"/>
</dbReference>
<dbReference type="InterPro" id="IPR034733">
    <property type="entry name" value="AcCoA_carboxyl_beta"/>
</dbReference>
<dbReference type="InterPro" id="IPR000438">
    <property type="entry name" value="Acetyl_CoA_COase_Trfase_b_su"/>
</dbReference>
<dbReference type="InterPro" id="IPR029045">
    <property type="entry name" value="ClpP/crotonase-like_dom_sf"/>
</dbReference>
<dbReference type="InterPro" id="IPR011762">
    <property type="entry name" value="COA_CT_N"/>
</dbReference>
<dbReference type="InterPro" id="IPR041010">
    <property type="entry name" value="Znf-ACC"/>
</dbReference>
<dbReference type="NCBIfam" id="TIGR00515">
    <property type="entry name" value="accD"/>
    <property type="match status" value="1"/>
</dbReference>
<dbReference type="PANTHER" id="PTHR42995">
    <property type="entry name" value="ACETYL-COENZYME A CARBOXYLASE CARBOXYL TRANSFERASE SUBUNIT BETA, CHLOROPLASTIC"/>
    <property type="match status" value="1"/>
</dbReference>
<dbReference type="PANTHER" id="PTHR42995:SF5">
    <property type="entry name" value="ACETYL-COENZYME A CARBOXYLASE CARBOXYL TRANSFERASE SUBUNIT BETA, CHLOROPLASTIC"/>
    <property type="match status" value="1"/>
</dbReference>
<dbReference type="Pfam" id="PF01039">
    <property type="entry name" value="Carboxyl_trans"/>
    <property type="match status" value="1"/>
</dbReference>
<dbReference type="Pfam" id="PF17848">
    <property type="entry name" value="Zn_ribbon_ACC"/>
    <property type="match status" value="1"/>
</dbReference>
<dbReference type="PRINTS" id="PR01070">
    <property type="entry name" value="ACCCTRFRASEB"/>
</dbReference>
<dbReference type="SUPFAM" id="SSF52096">
    <property type="entry name" value="ClpP/crotonase"/>
    <property type="match status" value="1"/>
</dbReference>
<dbReference type="PROSITE" id="PS50980">
    <property type="entry name" value="COA_CT_NTER"/>
    <property type="match status" value="1"/>
</dbReference>
<accession>Q187P6</accession>
<gene>
    <name evidence="1" type="primary">accD</name>
    <name type="ordered locus">CD630_19370</name>
</gene>